<sequence>MASSEKLKALQATMEKIEKNFGKGSIMKMGDDSVEQVEVIPTGSIALNVALGVGGYPRGRIIEIYGPESSGKTTLAIHAIAEAQKAGGIAAFIDAEHAFDRFYAAKLGVDVDNLWISQPDNGEQALEIAEQLIRSSAIDIIVIDSVAALTPKAEIEGDMGDNKVGLQARLMSQALRKLTGTVSKTRTTCIFINQLREKIGVMFGNPETTTGGNALKFYASVRIDIRGSQPIKDGEEVLGKLTKVKVVKNKVAPPFRKAEFDIMFGEGISHSGEIIDLGAELGIIKKSGSWYSYNDTKLGQGRDAAKVCIKDNPELAEELEGLIFEALNKK</sequence>
<comment type="function">
    <text evidence="1">Can catalyze the hydrolysis of ATP in the presence of single-stranded DNA, the ATP-dependent uptake of single-stranded DNA by duplex DNA, and the ATP-dependent hybridization of homologous single-stranded DNAs. It interacts with LexA causing its activation and leading to its autocatalytic cleavage.</text>
</comment>
<comment type="subcellular location">
    <subcellularLocation>
        <location evidence="1">Cytoplasm</location>
    </subcellularLocation>
</comment>
<comment type="similarity">
    <text evidence="1">Belongs to the RecA family.</text>
</comment>
<comment type="sequence caution" evidence="2">
    <conflict type="erroneous initiation">
        <sequence resource="EMBL-CDS" id="AAO79715"/>
    </conflict>
</comment>
<keyword id="KW-0067">ATP-binding</keyword>
<keyword id="KW-0963">Cytoplasm</keyword>
<keyword id="KW-0227">DNA damage</keyword>
<keyword id="KW-0233">DNA recombination</keyword>
<keyword id="KW-0234">DNA repair</keyword>
<keyword id="KW-0238">DNA-binding</keyword>
<keyword id="KW-0547">Nucleotide-binding</keyword>
<keyword id="KW-1185">Reference proteome</keyword>
<keyword id="KW-0742">SOS response</keyword>
<protein>
    <recommendedName>
        <fullName evidence="1">Protein RecA</fullName>
    </recommendedName>
    <alternativeName>
        <fullName evidence="1">Recombinase A</fullName>
    </alternativeName>
</protein>
<proteinExistence type="inferred from homology"/>
<organism>
    <name type="scientific">Bacteroides thetaiotaomicron (strain ATCC 29148 / DSM 2079 / JCM 5827 / CCUG 10774 / NCTC 10582 / VPI-5482 / E50)</name>
    <dbReference type="NCBI Taxonomy" id="226186"/>
    <lineage>
        <taxon>Bacteria</taxon>
        <taxon>Pseudomonadati</taxon>
        <taxon>Bacteroidota</taxon>
        <taxon>Bacteroidia</taxon>
        <taxon>Bacteroidales</taxon>
        <taxon>Bacteroidaceae</taxon>
        <taxon>Bacteroides</taxon>
    </lineage>
</organism>
<name>RECA_BACTN</name>
<feature type="chain" id="PRO_0000122657" description="Protein RecA">
    <location>
        <begin position="1"/>
        <end position="330"/>
    </location>
</feature>
<feature type="binding site" evidence="1">
    <location>
        <begin position="66"/>
        <end position="73"/>
    </location>
    <ligand>
        <name>ATP</name>
        <dbReference type="ChEBI" id="CHEBI:30616"/>
    </ligand>
</feature>
<dbReference type="EMBL" id="AE015928">
    <property type="protein sequence ID" value="AAO79715.1"/>
    <property type="status" value="ALT_INIT"/>
    <property type="molecule type" value="Genomic_DNA"/>
</dbReference>
<dbReference type="EMBL" id="U63514">
    <property type="protein sequence ID" value="AAB81399.1"/>
    <property type="molecule type" value="Genomic_DNA"/>
</dbReference>
<dbReference type="RefSeq" id="NP_813521.1">
    <property type="nucleotide sequence ID" value="NC_004663.1"/>
</dbReference>
<dbReference type="SMR" id="Q45791"/>
<dbReference type="FunCoup" id="Q45791">
    <property type="interactions" value="465"/>
</dbReference>
<dbReference type="STRING" id="226186.BT_4610"/>
<dbReference type="PaxDb" id="226186-BT_4610"/>
<dbReference type="EnsemblBacteria" id="AAO79715">
    <property type="protein sequence ID" value="AAO79715"/>
    <property type="gene ID" value="BT_4610"/>
</dbReference>
<dbReference type="KEGG" id="bth:BT_4610"/>
<dbReference type="PATRIC" id="fig|226186.12.peg.4689"/>
<dbReference type="eggNOG" id="COG0468">
    <property type="taxonomic scope" value="Bacteria"/>
</dbReference>
<dbReference type="HOGENOM" id="CLU_040469_3_2_10"/>
<dbReference type="InParanoid" id="Q45791"/>
<dbReference type="OrthoDB" id="9776733at2"/>
<dbReference type="Proteomes" id="UP000001414">
    <property type="component" value="Chromosome"/>
</dbReference>
<dbReference type="GO" id="GO:0005737">
    <property type="term" value="C:cytoplasm"/>
    <property type="evidence" value="ECO:0007669"/>
    <property type="project" value="UniProtKB-SubCell"/>
</dbReference>
<dbReference type="GO" id="GO:0005524">
    <property type="term" value="F:ATP binding"/>
    <property type="evidence" value="ECO:0007669"/>
    <property type="project" value="UniProtKB-UniRule"/>
</dbReference>
<dbReference type="GO" id="GO:0016887">
    <property type="term" value="F:ATP hydrolysis activity"/>
    <property type="evidence" value="ECO:0007669"/>
    <property type="project" value="InterPro"/>
</dbReference>
<dbReference type="GO" id="GO:0140664">
    <property type="term" value="F:ATP-dependent DNA damage sensor activity"/>
    <property type="evidence" value="ECO:0007669"/>
    <property type="project" value="InterPro"/>
</dbReference>
<dbReference type="GO" id="GO:0003684">
    <property type="term" value="F:damaged DNA binding"/>
    <property type="evidence" value="ECO:0007669"/>
    <property type="project" value="UniProtKB-UniRule"/>
</dbReference>
<dbReference type="GO" id="GO:0003697">
    <property type="term" value="F:single-stranded DNA binding"/>
    <property type="evidence" value="ECO:0007669"/>
    <property type="project" value="UniProtKB-UniRule"/>
</dbReference>
<dbReference type="GO" id="GO:0006310">
    <property type="term" value="P:DNA recombination"/>
    <property type="evidence" value="ECO:0007669"/>
    <property type="project" value="UniProtKB-UniRule"/>
</dbReference>
<dbReference type="GO" id="GO:0006281">
    <property type="term" value="P:DNA repair"/>
    <property type="evidence" value="ECO:0007669"/>
    <property type="project" value="UniProtKB-UniRule"/>
</dbReference>
<dbReference type="GO" id="GO:0009432">
    <property type="term" value="P:SOS response"/>
    <property type="evidence" value="ECO:0007669"/>
    <property type="project" value="UniProtKB-UniRule"/>
</dbReference>
<dbReference type="CDD" id="cd00983">
    <property type="entry name" value="RecA"/>
    <property type="match status" value="1"/>
</dbReference>
<dbReference type="FunFam" id="3.40.50.300:FF:000087">
    <property type="entry name" value="Recombinase RecA"/>
    <property type="match status" value="1"/>
</dbReference>
<dbReference type="Gene3D" id="3.40.50.300">
    <property type="entry name" value="P-loop containing nucleotide triphosphate hydrolases"/>
    <property type="match status" value="1"/>
</dbReference>
<dbReference type="HAMAP" id="MF_00268">
    <property type="entry name" value="RecA"/>
    <property type="match status" value="1"/>
</dbReference>
<dbReference type="InterPro" id="IPR003593">
    <property type="entry name" value="AAA+_ATPase"/>
</dbReference>
<dbReference type="InterPro" id="IPR013765">
    <property type="entry name" value="DNA_recomb/repair_RecA"/>
</dbReference>
<dbReference type="InterPro" id="IPR020584">
    <property type="entry name" value="DNA_recomb/repair_RecA_CS"/>
</dbReference>
<dbReference type="InterPro" id="IPR027417">
    <property type="entry name" value="P-loop_NTPase"/>
</dbReference>
<dbReference type="InterPro" id="IPR049261">
    <property type="entry name" value="RecA-like_C"/>
</dbReference>
<dbReference type="InterPro" id="IPR049428">
    <property type="entry name" value="RecA-like_N"/>
</dbReference>
<dbReference type="InterPro" id="IPR020588">
    <property type="entry name" value="RecA_ATP-bd"/>
</dbReference>
<dbReference type="InterPro" id="IPR023400">
    <property type="entry name" value="RecA_C_sf"/>
</dbReference>
<dbReference type="InterPro" id="IPR020587">
    <property type="entry name" value="RecA_monomer-monomer_interface"/>
</dbReference>
<dbReference type="NCBIfam" id="TIGR02012">
    <property type="entry name" value="tigrfam_recA"/>
    <property type="match status" value="1"/>
</dbReference>
<dbReference type="PANTHER" id="PTHR45900:SF1">
    <property type="entry name" value="MITOCHONDRIAL DNA REPAIR PROTEIN RECA HOMOLOG-RELATED"/>
    <property type="match status" value="1"/>
</dbReference>
<dbReference type="PANTHER" id="PTHR45900">
    <property type="entry name" value="RECA"/>
    <property type="match status" value="1"/>
</dbReference>
<dbReference type="Pfam" id="PF00154">
    <property type="entry name" value="RecA"/>
    <property type="match status" value="1"/>
</dbReference>
<dbReference type="Pfam" id="PF21096">
    <property type="entry name" value="RecA_C"/>
    <property type="match status" value="1"/>
</dbReference>
<dbReference type="PRINTS" id="PR00142">
    <property type="entry name" value="RECA"/>
</dbReference>
<dbReference type="SMART" id="SM00382">
    <property type="entry name" value="AAA"/>
    <property type="match status" value="1"/>
</dbReference>
<dbReference type="SUPFAM" id="SSF52540">
    <property type="entry name" value="P-loop containing nucleoside triphosphate hydrolases"/>
    <property type="match status" value="1"/>
</dbReference>
<dbReference type="SUPFAM" id="SSF54752">
    <property type="entry name" value="RecA protein, C-terminal domain"/>
    <property type="match status" value="1"/>
</dbReference>
<dbReference type="PROSITE" id="PS00321">
    <property type="entry name" value="RECA_1"/>
    <property type="match status" value="1"/>
</dbReference>
<dbReference type="PROSITE" id="PS50162">
    <property type="entry name" value="RECA_2"/>
    <property type="match status" value="1"/>
</dbReference>
<dbReference type="PROSITE" id="PS50163">
    <property type="entry name" value="RECA_3"/>
    <property type="match status" value="1"/>
</dbReference>
<accession>Q45791</accession>
<reference key="1">
    <citation type="journal article" date="2003" name="Science">
        <title>A genomic view of the human-Bacteroides thetaiotaomicron symbiosis.</title>
        <authorList>
            <person name="Xu J."/>
            <person name="Bjursell M.K."/>
            <person name="Himrod J."/>
            <person name="Deng S."/>
            <person name="Carmichael L.K."/>
            <person name="Chiang H.C."/>
            <person name="Hooper L.V."/>
            <person name="Gordon J.I."/>
        </authorList>
    </citation>
    <scope>NUCLEOTIDE SEQUENCE [LARGE SCALE GENOMIC DNA]</scope>
    <source>
        <strain>ATCC 29148 / DSM 2079 / JCM 5827 / CCUG 10774 / NCTC 10582 / VPI-5482 / E50</strain>
    </source>
</reference>
<reference key="2">
    <citation type="journal article" date="1997" name="J. Bacteriol.">
        <title>Construction and characterization of a Bacteroides thetaiotaomicron recA mutant: transfer of Bacteroides integrated conjugative elements is RecA independent.</title>
        <authorList>
            <person name="Cooper A.J."/>
            <person name="Kalinowski A.P."/>
            <person name="Shoemaker N.B."/>
            <person name="Salyers A.A."/>
        </authorList>
    </citation>
    <scope>NUCLEOTIDE SEQUENCE [GENOMIC DNA] OF 71-199</scope>
    <source>
        <strain>ATCC 29148 / DSM 2079 / JCM 5827 / CCUG 10774 / NCTC 10582 / VPI-5482 / E50</strain>
    </source>
</reference>
<gene>
    <name evidence="1" type="primary">recA</name>
    <name type="ordered locus">BT_4610</name>
</gene>
<evidence type="ECO:0000255" key="1">
    <source>
        <dbReference type="HAMAP-Rule" id="MF_00268"/>
    </source>
</evidence>
<evidence type="ECO:0000305" key="2"/>